<feature type="chain" id="PRO_1000067803" description="Large ribosomal subunit protein bL21">
    <location>
        <begin position="1"/>
        <end position="102"/>
    </location>
</feature>
<protein>
    <recommendedName>
        <fullName evidence="1">Large ribosomal subunit protein bL21</fullName>
    </recommendedName>
    <alternativeName>
        <fullName evidence="2">50S ribosomal protein L21</fullName>
    </alternativeName>
</protein>
<dbReference type="EMBL" id="CP000485">
    <property type="protein sequence ID" value="ABK87244.1"/>
    <property type="molecule type" value="Genomic_DNA"/>
</dbReference>
<dbReference type="RefSeq" id="WP_000270907.1">
    <property type="nucleotide sequence ID" value="NC_008600.1"/>
</dbReference>
<dbReference type="SMR" id="A0RJ51"/>
<dbReference type="GeneID" id="93006656"/>
<dbReference type="KEGG" id="btl:BALH_4027"/>
<dbReference type="HOGENOM" id="CLU_061463_3_2_9"/>
<dbReference type="GO" id="GO:0005737">
    <property type="term" value="C:cytoplasm"/>
    <property type="evidence" value="ECO:0007669"/>
    <property type="project" value="UniProtKB-ARBA"/>
</dbReference>
<dbReference type="GO" id="GO:1990904">
    <property type="term" value="C:ribonucleoprotein complex"/>
    <property type="evidence" value="ECO:0007669"/>
    <property type="project" value="UniProtKB-KW"/>
</dbReference>
<dbReference type="GO" id="GO:0005840">
    <property type="term" value="C:ribosome"/>
    <property type="evidence" value="ECO:0007669"/>
    <property type="project" value="UniProtKB-KW"/>
</dbReference>
<dbReference type="GO" id="GO:0019843">
    <property type="term" value="F:rRNA binding"/>
    <property type="evidence" value="ECO:0007669"/>
    <property type="project" value="UniProtKB-UniRule"/>
</dbReference>
<dbReference type="GO" id="GO:0003735">
    <property type="term" value="F:structural constituent of ribosome"/>
    <property type="evidence" value="ECO:0007669"/>
    <property type="project" value="InterPro"/>
</dbReference>
<dbReference type="GO" id="GO:0006412">
    <property type="term" value="P:translation"/>
    <property type="evidence" value="ECO:0007669"/>
    <property type="project" value="UniProtKB-UniRule"/>
</dbReference>
<dbReference type="HAMAP" id="MF_01363">
    <property type="entry name" value="Ribosomal_bL21"/>
    <property type="match status" value="1"/>
</dbReference>
<dbReference type="InterPro" id="IPR028909">
    <property type="entry name" value="bL21-like"/>
</dbReference>
<dbReference type="InterPro" id="IPR036164">
    <property type="entry name" value="bL21-like_sf"/>
</dbReference>
<dbReference type="InterPro" id="IPR001787">
    <property type="entry name" value="Ribosomal_bL21"/>
</dbReference>
<dbReference type="InterPro" id="IPR018258">
    <property type="entry name" value="Ribosomal_bL21_CS"/>
</dbReference>
<dbReference type="NCBIfam" id="TIGR00061">
    <property type="entry name" value="L21"/>
    <property type="match status" value="1"/>
</dbReference>
<dbReference type="PANTHER" id="PTHR21349">
    <property type="entry name" value="50S RIBOSOMAL PROTEIN L21"/>
    <property type="match status" value="1"/>
</dbReference>
<dbReference type="PANTHER" id="PTHR21349:SF0">
    <property type="entry name" value="LARGE RIBOSOMAL SUBUNIT PROTEIN BL21M"/>
    <property type="match status" value="1"/>
</dbReference>
<dbReference type="Pfam" id="PF00829">
    <property type="entry name" value="Ribosomal_L21p"/>
    <property type="match status" value="1"/>
</dbReference>
<dbReference type="SUPFAM" id="SSF141091">
    <property type="entry name" value="L21p-like"/>
    <property type="match status" value="1"/>
</dbReference>
<dbReference type="PROSITE" id="PS01169">
    <property type="entry name" value="RIBOSOMAL_L21"/>
    <property type="match status" value="1"/>
</dbReference>
<gene>
    <name evidence="1" type="primary">rplU</name>
    <name type="ordered locus">BALH_4027</name>
</gene>
<comment type="function">
    <text evidence="1">This protein binds to 23S rRNA in the presence of protein L20.</text>
</comment>
<comment type="subunit">
    <text evidence="1">Part of the 50S ribosomal subunit. Contacts protein L20.</text>
</comment>
<comment type="similarity">
    <text evidence="1">Belongs to the bacterial ribosomal protein bL21 family.</text>
</comment>
<organism>
    <name type="scientific">Bacillus thuringiensis (strain Al Hakam)</name>
    <dbReference type="NCBI Taxonomy" id="412694"/>
    <lineage>
        <taxon>Bacteria</taxon>
        <taxon>Bacillati</taxon>
        <taxon>Bacillota</taxon>
        <taxon>Bacilli</taxon>
        <taxon>Bacillales</taxon>
        <taxon>Bacillaceae</taxon>
        <taxon>Bacillus</taxon>
        <taxon>Bacillus cereus group</taxon>
    </lineage>
</organism>
<evidence type="ECO:0000255" key="1">
    <source>
        <dbReference type="HAMAP-Rule" id="MF_01363"/>
    </source>
</evidence>
<evidence type="ECO:0000305" key="2"/>
<accession>A0RJ51</accession>
<name>RL21_BACAH</name>
<reference key="1">
    <citation type="journal article" date="2007" name="J. Bacteriol.">
        <title>The complete genome sequence of Bacillus thuringiensis Al Hakam.</title>
        <authorList>
            <person name="Challacombe J.F."/>
            <person name="Altherr M.R."/>
            <person name="Xie G."/>
            <person name="Bhotika S.S."/>
            <person name="Brown N."/>
            <person name="Bruce D."/>
            <person name="Campbell C.S."/>
            <person name="Campbell M.L."/>
            <person name="Chen J."/>
            <person name="Chertkov O."/>
            <person name="Cleland C."/>
            <person name="Dimitrijevic M."/>
            <person name="Doggett N.A."/>
            <person name="Fawcett J.J."/>
            <person name="Glavina T."/>
            <person name="Goodwin L.A."/>
            <person name="Green L.D."/>
            <person name="Han C.S."/>
            <person name="Hill K.K."/>
            <person name="Hitchcock P."/>
            <person name="Jackson P.J."/>
            <person name="Keim P."/>
            <person name="Kewalramani A.R."/>
            <person name="Longmire J."/>
            <person name="Lucas S."/>
            <person name="Malfatti S."/>
            <person name="Martinez D."/>
            <person name="McMurry K."/>
            <person name="Meincke L.J."/>
            <person name="Misra M."/>
            <person name="Moseman B.L."/>
            <person name="Mundt M."/>
            <person name="Munk A.C."/>
            <person name="Okinaka R.T."/>
            <person name="Parson-Quintana B."/>
            <person name="Reilly L.P."/>
            <person name="Richardson P."/>
            <person name="Robinson D.L."/>
            <person name="Saunders E."/>
            <person name="Tapia R."/>
            <person name="Tesmer J.G."/>
            <person name="Thayer N."/>
            <person name="Thompson L.S."/>
            <person name="Tice H."/>
            <person name="Ticknor L.O."/>
            <person name="Wills P.L."/>
            <person name="Gilna P."/>
            <person name="Brettin T.S."/>
        </authorList>
    </citation>
    <scope>NUCLEOTIDE SEQUENCE [LARGE SCALE GENOMIC DNA]</scope>
    <source>
        <strain>Al Hakam</strain>
    </source>
</reference>
<keyword id="KW-0687">Ribonucleoprotein</keyword>
<keyword id="KW-0689">Ribosomal protein</keyword>
<keyword id="KW-0694">RNA-binding</keyword>
<keyword id="KW-0699">rRNA-binding</keyword>
<proteinExistence type="inferred from homology"/>
<sequence length="102" mass="11191">MYAIIETGGKQIKVEAGQAIYIEKLDVEAGETVTFDKVLFVGGENVKVGSPVVEGATVTAKVEKQGRAKKIIVFKYKAKKNNRKKQGHRQPYTKLVVEAINA</sequence>